<accession>F2QXM5</accession>
<protein>
    <recommendedName>
        <fullName evidence="5">Putative adhesin</fullName>
    </recommendedName>
    <alternativeName>
        <fullName evidence="4">Zonadhesin</fullName>
    </alternativeName>
</protein>
<name>ZONAD_KOMPC</name>
<sequence length="587" mass="62905">MKFAISTLLIILQAAAVFAAFPISDITVVSERTDASTAYLSDWFVVSFVFSTAGSDETIAGDATIEVSIPNELEFVQYPDSVDPSVSEFFTTAGVQVLSTAFDYDSHVLTFTFSDPGQVITDLEGVVFFTLKLSEQFTESASPGQHTFDFETSDQTYSPSVDLVALDRSQPIKLSNAVTGGVEWFVDIPGAFGDITNIDISTVQTPGTFDCSEVKYAVGSSLNEFGDFTPQDRTTFFSNSSSGEWIPITPASGLPVESFECGDGTISLSFAGELADDEVLRVSFLSNLADDVLEVQNVVNVDLTTADSRKRALTSFVLDEPFYRASRTDTAAFEAFAAVPADGDITSTSTAITSVTATVTHTTVTSVCYVCAETPVTVTYTAPVITNPIYYTTKVHVCNVCAETPITYTVTIPCETDEYAPAKPTGTEGEKIVTVITKEGGDKYTKTYEEVTYTKTYPKGGHEDHIVTVKTKEGGEKVTKTYEEVTYTKGPEIVTVVTKEGGEKVTTTYHDVPEVVTVITKEGGEKVTTTYPATYPATYTEGHSAGVPTSASTPPQATYTVSEAQVNLGSKSAVGLLAIVPMLFLAI</sequence>
<proteinExistence type="evidence at protein level"/>
<gene>
    <name type="ordered locus">PP7435_Chr3-1213</name>
</gene>
<organism>
    <name type="scientific">Komagataella phaffii (strain ATCC 76273 / CBS 7435 / CECT 11047 / NRRL Y-11430 / Wegner 21-1)</name>
    <name type="common">Yeast</name>
    <name type="synonym">Pichia pastoris</name>
    <dbReference type="NCBI Taxonomy" id="981350"/>
    <lineage>
        <taxon>Eukaryota</taxon>
        <taxon>Fungi</taxon>
        <taxon>Dikarya</taxon>
        <taxon>Ascomycota</taxon>
        <taxon>Saccharomycotina</taxon>
        <taxon>Pichiomycetes</taxon>
        <taxon>Pichiales</taxon>
        <taxon>Pichiaceae</taxon>
        <taxon>Komagataella</taxon>
    </lineage>
</organism>
<feature type="signal peptide" evidence="3">
    <location>
        <begin position="1"/>
        <end position="19"/>
    </location>
</feature>
<feature type="chain" id="PRO_0000447318" description="Putative adhesin">
    <location>
        <begin position="20"/>
        <end position="562"/>
    </location>
</feature>
<feature type="propeptide" id="PRO_0000447319" description="Removed in mature form" evidence="1">
    <location>
        <begin position="563"/>
        <end position="587"/>
    </location>
</feature>
<feature type="repeat" description="1" evidence="5">
    <location>
        <begin position="432"/>
        <end position="455"/>
    </location>
</feature>
<feature type="repeat" description="2" evidence="5">
    <location>
        <begin position="466"/>
        <end position="489"/>
    </location>
</feature>
<feature type="repeat" description="3" evidence="5">
    <location>
        <begin position="491"/>
        <end position="512"/>
    </location>
</feature>
<feature type="repeat" description="4" evidence="5">
    <location>
        <begin position="513"/>
        <end position="531"/>
    </location>
</feature>
<feature type="region of interest" description="4 X 24 AA approximate tandem repeats, Thr-rich" evidence="5">
    <location>
        <begin position="432"/>
        <end position="531"/>
    </location>
</feature>
<feature type="lipid moiety-binding region" description="GPI-anchor amidated serine" evidence="1">
    <location>
        <position position="562"/>
    </location>
</feature>
<feature type="glycosylation site" description="N-linked (GlcNAc...) asparagine" evidence="2">
    <location>
        <position position="239"/>
    </location>
</feature>
<feature type="disulfide bond" evidence="7">
    <location>
        <begin position="211"/>
        <end position="261"/>
    </location>
</feature>
<feature type="strand" evidence="8">
    <location>
        <begin position="23"/>
        <end position="30"/>
    </location>
</feature>
<feature type="turn" evidence="8">
    <location>
        <begin position="31"/>
        <end position="33"/>
    </location>
</feature>
<feature type="strand" evidence="8">
    <location>
        <begin position="34"/>
        <end position="38"/>
    </location>
</feature>
<feature type="strand" evidence="8">
    <location>
        <begin position="44"/>
        <end position="50"/>
    </location>
</feature>
<feature type="strand" evidence="8">
    <location>
        <begin position="64"/>
        <end position="68"/>
    </location>
</feature>
<feature type="strand" evidence="8">
    <location>
        <begin position="87"/>
        <end position="91"/>
    </location>
</feature>
<feature type="strand" evidence="8">
    <location>
        <begin position="96"/>
        <end position="103"/>
    </location>
</feature>
<feature type="turn" evidence="8">
    <location>
        <begin position="104"/>
        <end position="107"/>
    </location>
</feature>
<feature type="strand" evidence="8">
    <location>
        <begin position="108"/>
        <end position="113"/>
    </location>
</feature>
<feature type="strand" evidence="8">
    <location>
        <begin position="120"/>
        <end position="133"/>
    </location>
</feature>
<feature type="helix" evidence="8">
    <location>
        <begin position="135"/>
        <end position="139"/>
    </location>
</feature>
<feature type="strand" evidence="8">
    <location>
        <begin position="143"/>
        <end position="147"/>
    </location>
</feature>
<feature type="strand" evidence="8">
    <location>
        <begin position="160"/>
        <end position="163"/>
    </location>
</feature>
<feature type="strand" evidence="8">
    <location>
        <begin position="172"/>
        <end position="177"/>
    </location>
</feature>
<feature type="strand" evidence="8">
    <location>
        <begin position="179"/>
        <end position="189"/>
    </location>
</feature>
<feature type="strand" evidence="8">
    <location>
        <begin position="194"/>
        <end position="206"/>
    </location>
</feature>
<feature type="strand" evidence="8">
    <location>
        <begin position="208"/>
        <end position="219"/>
    </location>
</feature>
<feature type="strand" evidence="8">
    <location>
        <begin position="256"/>
        <end position="261"/>
    </location>
</feature>
<feature type="strand" evidence="8">
    <location>
        <begin position="263"/>
        <end position="272"/>
    </location>
</feature>
<feature type="strand" evidence="8">
    <location>
        <begin position="279"/>
        <end position="287"/>
    </location>
</feature>
<feature type="strand" evidence="8">
    <location>
        <begin position="294"/>
        <end position="305"/>
    </location>
</feature>
<feature type="strand" evidence="8">
    <location>
        <begin position="313"/>
        <end position="318"/>
    </location>
</feature>
<feature type="strand" evidence="8">
    <location>
        <begin position="330"/>
        <end position="338"/>
    </location>
</feature>
<reference key="1">
    <citation type="journal article" date="2011" name="J. Biotechnol.">
        <title>High-quality genome sequence of Pichia pastoris CBS7435.</title>
        <authorList>
            <person name="Kueberl A."/>
            <person name="Schneider J."/>
            <person name="Thallinger G.G."/>
            <person name="Anderl I."/>
            <person name="Wibberg D."/>
            <person name="Hajek T."/>
            <person name="Jaenicke S."/>
            <person name="Brinkrolf K."/>
            <person name="Goesmann A."/>
            <person name="Szczepanowski R."/>
            <person name="Puehler A."/>
            <person name="Schwab H."/>
            <person name="Glieder A."/>
            <person name="Pichler H."/>
        </authorList>
    </citation>
    <scope>NUCLEOTIDE SEQUENCE [LARGE SCALE GENOMIC DNA]</scope>
    <source>
        <strain>ATCC 76273 / CBS 7435 / CECT 11047 / NRRL Y-11430 / Wegner 21-1</strain>
    </source>
</reference>
<reference key="2">
    <citation type="journal article" date="2016" name="FEMS Yeast Res.">
        <title>Curation of the genome annotation of Pichia pastoris (Komagataella phaffii) CBS7435 from gene level to protein function.</title>
        <authorList>
            <person name="Valli M."/>
            <person name="Tatto N.E."/>
            <person name="Peymann A."/>
            <person name="Gruber C."/>
            <person name="Landes N."/>
            <person name="Ekker H."/>
            <person name="Thallinger G.G."/>
            <person name="Mattanovich D."/>
            <person name="Gasser B."/>
            <person name="Graf A.B."/>
        </authorList>
    </citation>
    <scope>GENOME REANNOTATION</scope>
    <source>
        <strain>ATCC 76273 / CBS 7435 / CECT 11047 / NRRL Y-11430 / Wegner 21-1</strain>
    </source>
</reference>
<reference evidence="7" key="3">
    <citation type="journal article" date="2016" name="J. Lipid Res.">
        <title>Crystal structure of linoleate 13R-manganese lipoxygenase in complex with an adhesion protein.</title>
        <authorList>
            <person name="Chen Y."/>
            <person name="Wennman A."/>
            <person name="Karkehabadi S."/>
            <person name="Engstroem A."/>
            <person name="Oliw E.H."/>
        </authorList>
    </citation>
    <scope>X-RAY CRYSTALLOGRAPHY (2.60 ANGSTROMS) OF 20-339</scope>
    <scope>PROTEIN SEQUENCE OF 20-32 AND 216-233</scope>
    <scope>IDENTIFICATION BY MASS SPECTROMETRY</scope>
    <scope>DISULFIDE BONDS</scope>
</reference>
<keyword id="KW-0002">3D-structure</keyword>
<keyword id="KW-1003">Cell membrane</keyword>
<keyword id="KW-0134">Cell wall</keyword>
<keyword id="KW-0903">Direct protein sequencing</keyword>
<keyword id="KW-1015">Disulfide bond</keyword>
<keyword id="KW-0325">Glycoprotein</keyword>
<keyword id="KW-0336">GPI-anchor</keyword>
<keyword id="KW-0449">Lipoprotein</keyword>
<keyword id="KW-0472">Membrane</keyword>
<keyword id="KW-0677">Repeat</keyword>
<keyword id="KW-0964">Secreted</keyword>
<keyword id="KW-0732">Signal</keyword>
<evidence type="ECO:0000255" key="1"/>
<evidence type="ECO:0000255" key="2">
    <source>
        <dbReference type="PROSITE-ProRule" id="PRU00498"/>
    </source>
</evidence>
<evidence type="ECO:0000269" key="3">
    <source>
    </source>
</evidence>
<evidence type="ECO:0000303" key="4">
    <source>
    </source>
</evidence>
<evidence type="ECO:0000305" key="5"/>
<evidence type="ECO:0000305" key="6">
    <source>
    </source>
</evidence>
<evidence type="ECO:0007744" key="7">
    <source>
        <dbReference type="PDB" id="5FX8"/>
    </source>
</evidence>
<evidence type="ECO:0007829" key="8">
    <source>
        <dbReference type="PDB" id="5FX8"/>
    </source>
</evidence>
<comment type="function">
    <text evidence="6">Putative adhesion protein. May be involved in cell-cell interaction, interacting with other proteins by salt bridges and hydrogen bonds.</text>
</comment>
<comment type="subcellular location">
    <subcellularLocation>
        <location>Cell membrane</location>
        <topology evidence="1">Lipid-anchor</topology>
        <topology evidence="1">GPI-anchor</topology>
    </subcellularLocation>
    <subcellularLocation>
        <location evidence="5">Secreted</location>
        <location evidence="5">Cell wall</location>
    </subcellularLocation>
    <text evidence="5">Identified as covalently-linked GPI-modified cell wall protein (GPI-CWP) in the outer cell wall layer.</text>
</comment>
<comment type="PTM">
    <text evidence="5">The GPI-anchor is attached to the protein in the endoplasmic reticulum and serves to target the protein to the cell surface. There, the glucosamine-inositol phospholipid moiety is cleaved off and the GPI-modified mannoprotein is covalently attached via its lipidless GPI glycan remnant to the 1,6-beta-glucan of the outer cell wall layer.</text>
</comment>
<dbReference type="EMBL" id="FR839630">
    <property type="protein sequence ID" value="CCA40153.1"/>
    <property type="molecule type" value="Genomic_DNA"/>
</dbReference>
<dbReference type="PDB" id="5FX8">
    <property type="method" value="X-ray"/>
    <property type="resolution" value="2.60 A"/>
    <property type="chains" value="U=20-339"/>
</dbReference>
<dbReference type="PDBsum" id="5FX8"/>
<dbReference type="SMR" id="F2QXM5"/>
<dbReference type="HOGENOM" id="CLU_464686_0_0_1"/>
<dbReference type="Proteomes" id="UP000006853">
    <property type="component" value="Chromosome 3"/>
</dbReference>
<dbReference type="GO" id="GO:0005576">
    <property type="term" value="C:extracellular region"/>
    <property type="evidence" value="ECO:0007669"/>
    <property type="project" value="UniProtKB-KW"/>
</dbReference>
<dbReference type="GO" id="GO:0005886">
    <property type="term" value="C:plasma membrane"/>
    <property type="evidence" value="ECO:0007669"/>
    <property type="project" value="UniProtKB-SubCell"/>
</dbReference>
<dbReference type="GO" id="GO:0098552">
    <property type="term" value="C:side of membrane"/>
    <property type="evidence" value="ECO:0007669"/>
    <property type="project" value="UniProtKB-KW"/>
</dbReference>
<dbReference type="InterPro" id="IPR055018">
    <property type="entry name" value="Zona_CL1"/>
</dbReference>
<dbReference type="InterPro" id="IPR055019">
    <property type="entry name" value="Zona_CL2"/>
</dbReference>
<dbReference type="Pfam" id="PF22320">
    <property type="entry name" value="Zona_CL1"/>
    <property type="match status" value="1"/>
</dbReference>
<dbReference type="Pfam" id="PF22321">
    <property type="entry name" value="Zona_CL2"/>
    <property type="match status" value="1"/>
</dbReference>